<feature type="propeptide" id="PRO_0000002770">
    <location>
        <begin position="1"/>
        <end position="21"/>
    </location>
</feature>
<feature type="chain" id="PRO_0000002771" description="Bacteriocin lactococcin-B">
    <location>
        <begin position="22"/>
        <end position="68"/>
    </location>
</feature>
<feature type="mutagenesis site" description="No loss of activity." evidence="1">
    <original>C</original>
    <variation>A</variation>
    <variation>D</variation>
    <variation>E</variation>
    <variation>F</variation>
    <variation>G</variation>
    <variation>I</variation>
    <variation>L</variation>
    <variation>M</variation>
    <variation>N</variation>
    <variation>P</variation>
    <variation>Q</variation>
    <variation>S</variation>
    <variation>T</variation>
    <variation>V</variation>
    <variation>Y</variation>
    <variation>W</variation>
    <location>
        <position position="45"/>
    </location>
</feature>
<feature type="mutagenesis site" description="Loss of activity." evidence="1">
    <original>C</original>
    <variation>R</variation>
    <variation>K</variation>
    <location>
        <position position="45"/>
    </location>
</feature>
<proteinExistence type="evidence at protein level"/>
<keyword id="KW-0044">Antibiotic</keyword>
<keyword id="KW-0929">Antimicrobial</keyword>
<keyword id="KW-0078">Bacteriocin</keyword>
<keyword id="KW-0614">Plasmid</keyword>
<keyword id="KW-0964">Secreted</keyword>
<name>LCNB_LACLC</name>
<dbReference type="EMBL" id="S38128">
    <property type="protein sequence ID" value="AAB22372.1"/>
    <property type="molecule type" value="Genomic_DNA"/>
</dbReference>
<dbReference type="PIR" id="B43940">
    <property type="entry name" value="B43940"/>
</dbReference>
<dbReference type="RefSeq" id="WP_015081788.1">
    <property type="nucleotide sequence ID" value="NZ_WJUX01000070.1"/>
</dbReference>
<dbReference type="SMR" id="P35518"/>
<dbReference type="TCDB" id="1.C.22.1.2">
    <property type="family name" value="the lactococcin a (lactococcin a) family"/>
</dbReference>
<dbReference type="GO" id="GO:0005576">
    <property type="term" value="C:extracellular region"/>
    <property type="evidence" value="ECO:0007669"/>
    <property type="project" value="UniProtKB-SubCell"/>
</dbReference>
<dbReference type="GO" id="GO:0042742">
    <property type="term" value="P:defense response to bacterium"/>
    <property type="evidence" value="ECO:0007669"/>
    <property type="project" value="UniProtKB-KW"/>
</dbReference>
<dbReference type="GO" id="GO:0031640">
    <property type="term" value="P:killing of cells of another organism"/>
    <property type="evidence" value="ECO:0007669"/>
    <property type="project" value="UniProtKB-KW"/>
</dbReference>
<dbReference type="InterPro" id="IPR007464">
    <property type="entry name" value="Bacteriocin_IId"/>
</dbReference>
<dbReference type="InterPro" id="IPR010133">
    <property type="entry name" value="Bacteriocin_signal_seq"/>
</dbReference>
<dbReference type="NCBIfam" id="TIGR01847">
    <property type="entry name" value="bacteriocin_sig"/>
    <property type="match status" value="1"/>
</dbReference>
<dbReference type="Pfam" id="PF04369">
    <property type="entry name" value="Lactococcin"/>
    <property type="match status" value="1"/>
</dbReference>
<protein>
    <recommendedName>
        <fullName>Bacteriocin lactococcin-B</fullName>
        <shortName>LCN-B</shortName>
    </recommendedName>
</protein>
<sequence>MKNQLNFNIVSDEELAEVNGGSLQYVMSAGPYTWYKDTRTGKTICKQTIDTASYTFGVMAEGWGKTFH</sequence>
<evidence type="ECO:0000269" key="1">
    <source>
    </source>
</evidence>
<gene>
    <name type="primary">lcnB</name>
</gene>
<organism>
    <name type="scientific">Lactococcus lactis subsp. cremoris</name>
    <name type="common">Streptococcus cremoris</name>
    <dbReference type="NCBI Taxonomy" id="1359"/>
    <lineage>
        <taxon>Bacteria</taxon>
        <taxon>Bacillati</taxon>
        <taxon>Bacillota</taxon>
        <taxon>Bacilli</taxon>
        <taxon>Lactobacillales</taxon>
        <taxon>Streptococcaceae</taxon>
        <taxon>Lactococcus</taxon>
    </lineage>
</organism>
<reference key="1">
    <citation type="journal article" date="1992" name="Appl. Environ. Microbiol.">
        <title>Cloning, sequencing, and expression in Escherichia coli of lcnB, a third bacteriocin determinant from the lactococcal bacteriocin plasmid p9B4-6.</title>
        <authorList>
            <person name="van Belkum M.J."/>
            <person name="Kok J."/>
            <person name="Venema G."/>
        </authorList>
    </citation>
    <scope>NUCLEOTIDE SEQUENCE [GENOMIC DNA]</scope>
    <source>
        <strain>9B4</strain>
    </source>
</reference>
<reference key="2">
    <citation type="journal article" date="1996" name="Microbiology">
        <title>Mutational analysis and chemical modification of Cys24 of lactococcin B, a bacteriocin produced by Lactococcus lactis.</title>
        <authorList>
            <person name="Venema K."/>
            <person name="Dost M.H."/>
            <person name="Venema G."/>
            <person name="Kok J."/>
        </authorList>
    </citation>
    <scope>MUTAGENESIS OF CYS-45</scope>
</reference>
<comment type="function">
    <text>Kills Lactococci by dissipating the membrane potential of the cells.</text>
</comment>
<comment type="subcellular location">
    <subcellularLocation>
        <location>Secreted</location>
    </subcellularLocation>
</comment>
<geneLocation type="plasmid">
    <name>p9B4-6</name>
</geneLocation>
<accession>P35518</accession>